<sequence>MSEHHVNIPAPQFSTYATVIDPPKHVTATHPDELTTASHPQPTHPSAPQDPSPAVPSTPVRVPYPTAPPPIPPAPEAVTAGPKKMALAPSSTKTYKQKRTFKVIIVGNAAVGKTCLSFRFCCGRFPEHTEATIGVDFRERSCVIENELLRVQLWDTAGQERYRQSIVAHYYRNVNAVVFVYDVTCRESFNDLALWIKECEKHGLVGDSEVPRILIGNKCDVECTNRVSTDEAQMFADRNNMALFETSAKLASEADHVESIFLTLLHKLQQSKPMHVQSQDERHQKEQERLILKANETENVEEEGFCC</sequence>
<dbReference type="EMBL" id="Z35640">
    <property type="protein sequence ID" value="CAA84705.1"/>
    <property type="molecule type" value="Genomic_DNA"/>
</dbReference>
<dbReference type="EMBL" id="U68264">
    <property type="protein sequence ID" value="AAB16979.1"/>
    <property type="molecule type" value="mRNA"/>
</dbReference>
<dbReference type="PIR" id="T22128">
    <property type="entry name" value="T22128"/>
</dbReference>
<dbReference type="RefSeq" id="NP_499314.1">
    <property type="nucleotide sequence ID" value="NM_066913.7"/>
</dbReference>
<dbReference type="SMR" id="Q20365"/>
<dbReference type="BioGRID" id="41661">
    <property type="interactions" value="3"/>
</dbReference>
<dbReference type="FunCoup" id="Q20365">
    <property type="interactions" value="1149"/>
</dbReference>
<dbReference type="IntAct" id="Q20365">
    <property type="interactions" value="2"/>
</dbReference>
<dbReference type="STRING" id="6239.F43D9.2.1"/>
<dbReference type="PaxDb" id="6239-F43D9.2"/>
<dbReference type="EnsemblMetazoa" id="F43D9.2.1">
    <property type="protein sequence ID" value="F43D9.2.1"/>
    <property type="gene ID" value="WBGene00004283"/>
</dbReference>
<dbReference type="GeneID" id="176470"/>
<dbReference type="KEGG" id="cel:CELE_F43D9.2"/>
<dbReference type="UCSC" id="F43D9.2">
    <property type="organism name" value="c. elegans"/>
</dbReference>
<dbReference type="AGR" id="WB:WBGene00004283"/>
<dbReference type="CTD" id="176470"/>
<dbReference type="WormBase" id="F43D9.2">
    <property type="protein sequence ID" value="CE00992"/>
    <property type="gene ID" value="WBGene00004283"/>
    <property type="gene designation" value="rab-33"/>
</dbReference>
<dbReference type="eggNOG" id="KOG0084">
    <property type="taxonomic scope" value="Eukaryota"/>
</dbReference>
<dbReference type="GeneTree" id="ENSGT00940000168608"/>
<dbReference type="HOGENOM" id="CLU_041217_10_3_1"/>
<dbReference type="InParanoid" id="Q20365"/>
<dbReference type="OMA" id="WNQREQE"/>
<dbReference type="OrthoDB" id="10006973at2759"/>
<dbReference type="PhylomeDB" id="Q20365"/>
<dbReference type="Reactome" id="R-CEL-6811438">
    <property type="pathway name" value="Intra-Golgi traffic"/>
</dbReference>
<dbReference type="Reactome" id="R-CEL-8854214">
    <property type="pathway name" value="TBC/RABGAPs"/>
</dbReference>
<dbReference type="Reactome" id="R-CEL-8873719">
    <property type="pathway name" value="RAB geranylgeranylation"/>
</dbReference>
<dbReference type="PRO" id="PR:Q20365"/>
<dbReference type="Proteomes" id="UP000001940">
    <property type="component" value="Chromosome III"/>
</dbReference>
<dbReference type="Bgee" id="WBGene00004283">
    <property type="expression patterns" value="Expressed in adult organism and 4 other cell types or tissues"/>
</dbReference>
<dbReference type="GO" id="GO:0005768">
    <property type="term" value="C:endosome"/>
    <property type="evidence" value="ECO:0000318"/>
    <property type="project" value="GO_Central"/>
</dbReference>
<dbReference type="GO" id="GO:0005794">
    <property type="term" value="C:Golgi apparatus"/>
    <property type="evidence" value="ECO:0000318"/>
    <property type="project" value="GO_Central"/>
</dbReference>
<dbReference type="GO" id="GO:0005886">
    <property type="term" value="C:plasma membrane"/>
    <property type="evidence" value="ECO:0007669"/>
    <property type="project" value="UniProtKB-SubCell"/>
</dbReference>
<dbReference type="GO" id="GO:0005525">
    <property type="term" value="F:GTP binding"/>
    <property type="evidence" value="ECO:0000318"/>
    <property type="project" value="GO_Central"/>
</dbReference>
<dbReference type="GO" id="GO:0003924">
    <property type="term" value="F:GTPase activity"/>
    <property type="evidence" value="ECO:0000318"/>
    <property type="project" value="GO_Central"/>
</dbReference>
<dbReference type="GO" id="GO:0032482">
    <property type="term" value="P:Rab protein signal transduction"/>
    <property type="evidence" value="ECO:0007669"/>
    <property type="project" value="InterPro"/>
</dbReference>
<dbReference type="CDD" id="cd04115">
    <property type="entry name" value="Rab33B_Rab33A"/>
    <property type="match status" value="1"/>
</dbReference>
<dbReference type="FunFam" id="3.40.50.300:FF:002841">
    <property type="entry name" value="Ras-related protein Rab-33"/>
    <property type="match status" value="1"/>
</dbReference>
<dbReference type="Gene3D" id="3.40.50.300">
    <property type="entry name" value="P-loop containing nucleotide triphosphate hydrolases"/>
    <property type="match status" value="1"/>
</dbReference>
<dbReference type="InterPro" id="IPR027417">
    <property type="entry name" value="P-loop_NTPase"/>
</dbReference>
<dbReference type="InterPro" id="IPR041822">
    <property type="entry name" value="Rab33A/B"/>
</dbReference>
<dbReference type="InterPro" id="IPR005225">
    <property type="entry name" value="Small_GTP-bd"/>
</dbReference>
<dbReference type="InterPro" id="IPR001806">
    <property type="entry name" value="Small_GTPase"/>
</dbReference>
<dbReference type="NCBIfam" id="TIGR00231">
    <property type="entry name" value="small_GTP"/>
    <property type="match status" value="1"/>
</dbReference>
<dbReference type="PANTHER" id="PTHR47978">
    <property type="match status" value="1"/>
</dbReference>
<dbReference type="Pfam" id="PF00071">
    <property type="entry name" value="Ras"/>
    <property type="match status" value="1"/>
</dbReference>
<dbReference type="PRINTS" id="PR00449">
    <property type="entry name" value="RASTRNSFRMNG"/>
</dbReference>
<dbReference type="SMART" id="SM00175">
    <property type="entry name" value="RAB"/>
    <property type="match status" value="1"/>
</dbReference>
<dbReference type="SMART" id="SM00176">
    <property type="entry name" value="RAN"/>
    <property type="match status" value="1"/>
</dbReference>
<dbReference type="SMART" id="SM00173">
    <property type="entry name" value="RAS"/>
    <property type="match status" value="1"/>
</dbReference>
<dbReference type="SMART" id="SM00174">
    <property type="entry name" value="RHO"/>
    <property type="match status" value="1"/>
</dbReference>
<dbReference type="SUPFAM" id="SSF52540">
    <property type="entry name" value="P-loop containing nucleoside triphosphate hydrolases"/>
    <property type="match status" value="1"/>
</dbReference>
<dbReference type="PROSITE" id="PS51419">
    <property type="entry name" value="RAB"/>
    <property type="match status" value="1"/>
</dbReference>
<feature type="chain" id="PRO_0000121242" description="Ras-related protein Rab-33">
    <location>
        <begin position="1"/>
        <end position="307"/>
    </location>
</feature>
<feature type="region of interest" description="Disordered" evidence="3">
    <location>
        <begin position="19"/>
        <end position="80"/>
    </location>
</feature>
<feature type="short sequence motif" description="Effector region" evidence="1">
    <location>
        <begin position="129"/>
        <end position="137"/>
    </location>
</feature>
<feature type="compositionally biased region" description="Pro residues" evidence="3">
    <location>
        <begin position="42"/>
        <end position="56"/>
    </location>
</feature>
<feature type="compositionally biased region" description="Pro residues" evidence="3">
    <location>
        <begin position="65"/>
        <end position="75"/>
    </location>
</feature>
<feature type="binding site" evidence="1">
    <location>
        <begin position="107"/>
        <end position="114"/>
    </location>
    <ligand>
        <name>GTP</name>
        <dbReference type="ChEBI" id="CHEBI:37565"/>
    </ligand>
</feature>
<feature type="binding site" evidence="1">
    <location>
        <begin position="155"/>
        <end position="159"/>
    </location>
    <ligand>
        <name>GTP</name>
        <dbReference type="ChEBI" id="CHEBI:37565"/>
    </ligand>
</feature>
<feature type="binding site" evidence="1">
    <location>
        <begin position="217"/>
        <end position="220"/>
    </location>
    <ligand>
        <name>GTP</name>
        <dbReference type="ChEBI" id="CHEBI:37565"/>
    </ligand>
</feature>
<feature type="lipid moiety-binding region" description="S-geranylgeranyl cysteine" evidence="2">
    <location>
        <position position="306"/>
    </location>
</feature>
<feature type="lipid moiety-binding region" description="S-geranylgeranyl cysteine" evidence="2">
    <location>
        <position position="307"/>
    </location>
</feature>
<name>RAB33_CAEEL</name>
<protein>
    <recommendedName>
        <fullName>Ras-related protein Rab-33</fullName>
    </recommendedName>
</protein>
<evidence type="ECO:0000250" key="1"/>
<evidence type="ECO:0000255" key="2"/>
<evidence type="ECO:0000256" key="3">
    <source>
        <dbReference type="SAM" id="MobiDB-lite"/>
    </source>
</evidence>
<evidence type="ECO:0000305" key="4"/>
<gene>
    <name type="primary">rab-33</name>
    <name type="ORF">F43D9.2</name>
</gene>
<accession>Q20365</accession>
<accession>Q94154</accession>
<keyword id="KW-1003">Cell membrane</keyword>
<keyword id="KW-0342">GTP-binding</keyword>
<keyword id="KW-0449">Lipoprotein</keyword>
<keyword id="KW-0472">Membrane</keyword>
<keyword id="KW-0547">Nucleotide-binding</keyword>
<keyword id="KW-0636">Prenylation</keyword>
<keyword id="KW-1185">Reference proteome</keyword>
<organism>
    <name type="scientific">Caenorhabditis elegans</name>
    <dbReference type="NCBI Taxonomy" id="6239"/>
    <lineage>
        <taxon>Eukaryota</taxon>
        <taxon>Metazoa</taxon>
        <taxon>Ecdysozoa</taxon>
        <taxon>Nematoda</taxon>
        <taxon>Chromadorea</taxon>
        <taxon>Rhabditida</taxon>
        <taxon>Rhabditina</taxon>
        <taxon>Rhabditomorpha</taxon>
        <taxon>Rhabditoidea</taxon>
        <taxon>Rhabditidae</taxon>
        <taxon>Peloderinae</taxon>
        <taxon>Caenorhabditis</taxon>
    </lineage>
</organism>
<reference key="1">
    <citation type="journal article" date="1998" name="Science">
        <title>Genome sequence of the nematode C. elegans: a platform for investigating biology.</title>
        <authorList>
            <consortium name="The C. elegans sequencing consortium"/>
        </authorList>
    </citation>
    <scope>NUCLEOTIDE SEQUENCE [LARGE SCALE GENOMIC DNA]</scope>
    <source>
        <strain>Bristol N2</strain>
    </source>
</reference>
<reference key="2">
    <citation type="submission" date="1996-10" db="EMBL/GenBank/DDBJ databases">
        <authorList>
            <person name="Nonet M.L."/>
            <person name="Staunton J.E."/>
            <person name="Kilgard M.P."/>
            <person name="Fergestad T."/>
            <person name="Jorgensen E."/>
            <person name="Hartweig E."/>
            <person name="Horvitz H.R."/>
            <person name="Meyer B.J."/>
        </authorList>
    </citation>
    <scope>NUCLEOTIDE SEQUENCE [MRNA] OF 154-219</scope>
</reference>
<proteinExistence type="evidence at transcript level"/>
<comment type="subcellular location">
    <subcellularLocation>
        <location evidence="4">Cell membrane</location>
        <topology evidence="4">Lipid-anchor</topology>
        <orientation evidence="4">Cytoplasmic side</orientation>
    </subcellularLocation>
</comment>
<comment type="similarity">
    <text evidence="4">Belongs to the small GTPase superfamily. Rab family.</text>
</comment>